<sequence>INNWVRVPPCDQVCSRTNPEKDECCRAHGHAFHATCSGGMQCYRR</sequence>
<organism evidence="3">
    <name type="scientific">Oiketicus kirbyi</name>
    <name type="common">Bagworm moth</name>
    <dbReference type="NCBI Taxonomy" id="201386"/>
    <lineage>
        <taxon>Eukaryota</taxon>
        <taxon>Metazoa</taxon>
        <taxon>Ecdysozoa</taxon>
        <taxon>Arthropoda</taxon>
        <taxon>Hexapoda</taxon>
        <taxon>Insecta</taxon>
        <taxon>Pterygota</taxon>
        <taxon>Neoptera</taxon>
        <taxon>Endopterygota</taxon>
        <taxon>Lepidoptera</taxon>
        <taxon>Glossata</taxon>
        <taxon>Ditrysia</taxon>
        <taxon>Tineoidea</taxon>
        <taxon>Psychidae</taxon>
        <taxon>Oiketicinae</taxon>
        <taxon>Oiketicus</taxon>
    </lineage>
</organism>
<keyword id="KW-0044">Antibiotic</keyword>
<keyword id="KW-0929">Antimicrobial</keyword>
<keyword id="KW-0903">Direct protein sequencing</keyword>
<keyword id="KW-1015">Disulfide bond</keyword>
<keyword id="KW-0295">Fungicide</keyword>
<keyword id="KW-0391">Immunity</keyword>
<keyword id="KW-0399">Innate immunity</keyword>
<keyword id="KW-0964">Secreted</keyword>
<name>PSYC_OIKKI</name>
<protein>
    <recommendedName>
        <fullName>Psychimicin</fullName>
    </recommendedName>
</protein>
<dbReference type="SMR" id="P83421"/>
<dbReference type="GO" id="GO:0005576">
    <property type="term" value="C:extracellular region"/>
    <property type="evidence" value="ECO:0007669"/>
    <property type="project" value="UniProtKB-SubCell"/>
</dbReference>
<dbReference type="GO" id="GO:0042742">
    <property type="term" value="P:defense response to bacterium"/>
    <property type="evidence" value="ECO:0007669"/>
    <property type="project" value="UniProtKB-KW"/>
</dbReference>
<dbReference type="GO" id="GO:0050832">
    <property type="term" value="P:defense response to fungus"/>
    <property type="evidence" value="ECO:0007669"/>
    <property type="project" value="UniProtKB-KW"/>
</dbReference>
<dbReference type="GO" id="GO:0045087">
    <property type="term" value="P:innate immune response"/>
    <property type="evidence" value="ECO:0007669"/>
    <property type="project" value="UniProtKB-KW"/>
</dbReference>
<dbReference type="GO" id="GO:0031640">
    <property type="term" value="P:killing of cells of another organism"/>
    <property type="evidence" value="ECO:0007669"/>
    <property type="project" value="UniProtKB-KW"/>
</dbReference>
<dbReference type="Gene3D" id="3.30.30.120">
    <property type="entry name" value="Diapause-specific peptide"/>
    <property type="match status" value="1"/>
</dbReference>
<dbReference type="InterPro" id="IPR038203">
    <property type="entry name" value="Diapausin_sf"/>
</dbReference>
<dbReference type="Pfam" id="PF08036">
    <property type="entry name" value="Antimicrobial_6"/>
    <property type="match status" value="1"/>
</dbReference>
<comment type="function">
    <text evidence="2 3">Has antimicrobial activity. Is particularly active against fungi, and to a lesser extent against Gram-positive and Gram-negative bacteria.</text>
</comment>
<comment type="subunit">
    <text evidence="2 3">Monomer.</text>
</comment>
<comment type="subcellular location">
    <subcellularLocation>
        <location evidence="3">Secreted</location>
    </subcellularLocation>
</comment>
<comment type="tissue specificity">
    <text evidence="2 3">Hemolymph.</text>
</comment>
<comment type="mass spectrometry"/>
<comment type="similarity">
    <text evidence="3">Belongs to the diapausin family.</text>
</comment>
<accession>P83421</accession>
<proteinExistence type="evidence at protein level"/>
<reference evidence="3" key="1">
    <citation type="submission" date="2002-07" db="UniProtKB">
        <authorList>
            <person name="Bulet P."/>
        </authorList>
    </citation>
    <scope>PROTEIN SEQUENCE</scope>
    <scope>FUNCTION</scope>
    <scope>SUBUNIT</scope>
    <scope>TISSUE SPECIFICITY</scope>
    <scope>MASS SPECTROMETRY</scope>
    <source>
        <tissue>Hemolymph</tissue>
    </source>
</reference>
<evidence type="ECO:0000250" key="1">
    <source>
        <dbReference type="UniProtKB" id="Q8T0W8"/>
    </source>
</evidence>
<evidence type="ECO:0000269" key="2">
    <source ref="1"/>
</evidence>
<evidence type="ECO:0000305" key="3"/>
<feature type="chain" id="PRO_0000179985" description="Psychimicin">
    <location>
        <begin position="1"/>
        <end position="45"/>
    </location>
</feature>
<feature type="disulfide bond" evidence="1">
    <location>
        <begin position="10"/>
        <end position="24"/>
    </location>
</feature>
<feature type="disulfide bond" evidence="1">
    <location>
        <begin position="14"/>
        <end position="36"/>
    </location>
</feature>
<feature type="disulfide bond" evidence="1">
    <location>
        <begin position="25"/>
        <end position="42"/>
    </location>
</feature>